<evidence type="ECO:0000255" key="1">
    <source>
        <dbReference type="HAMAP-Rule" id="MF_00050"/>
    </source>
</evidence>
<keyword id="KW-0963">Cytoplasm</keyword>
<keyword id="KW-0251">Elongation factor</keyword>
<keyword id="KW-0648">Protein biosynthesis</keyword>
<accession>Q1CAN4</accession>
<comment type="function">
    <text evidence="1">Associates with the EF-Tu.GDP complex and induces the exchange of GDP to GTP. It remains bound to the aminoacyl-tRNA.EF-Tu.GTP complex up to the GTP hydrolysis stage on the ribosome.</text>
</comment>
<comment type="subcellular location">
    <subcellularLocation>
        <location evidence="1">Cytoplasm</location>
    </subcellularLocation>
</comment>
<comment type="similarity">
    <text evidence="1">Belongs to the EF-Ts family.</text>
</comment>
<feature type="chain" id="PRO_1000006206" description="Elongation factor Ts">
    <location>
        <begin position="1"/>
        <end position="285"/>
    </location>
</feature>
<feature type="region of interest" description="Involved in Mg(2+) ion dislocation from EF-Tu" evidence="1">
    <location>
        <begin position="82"/>
        <end position="85"/>
    </location>
</feature>
<name>EFTS_YERPA</name>
<dbReference type="EMBL" id="CP000308">
    <property type="protein sequence ID" value="ABG12488.1"/>
    <property type="molecule type" value="Genomic_DNA"/>
</dbReference>
<dbReference type="RefSeq" id="WP_002212132.1">
    <property type="nucleotide sequence ID" value="NZ_CP009906.1"/>
</dbReference>
<dbReference type="SMR" id="Q1CAN4"/>
<dbReference type="GeneID" id="96662369"/>
<dbReference type="KEGG" id="ypa:YPA_0520"/>
<dbReference type="Proteomes" id="UP000001971">
    <property type="component" value="Chromosome"/>
</dbReference>
<dbReference type="GO" id="GO:0005737">
    <property type="term" value="C:cytoplasm"/>
    <property type="evidence" value="ECO:0007669"/>
    <property type="project" value="UniProtKB-SubCell"/>
</dbReference>
<dbReference type="GO" id="GO:0003746">
    <property type="term" value="F:translation elongation factor activity"/>
    <property type="evidence" value="ECO:0007669"/>
    <property type="project" value="UniProtKB-UniRule"/>
</dbReference>
<dbReference type="CDD" id="cd14275">
    <property type="entry name" value="UBA_EF-Ts"/>
    <property type="match status" value="1"/>
</dbReference>
<dbReference type="FunFam" id="1.10.286.20:FF:000001">
    <property type="entry name" value="Elongation factor Ts"/>
    <property type="match status" value="1"/>
</dbReference>
<dbReference type="FunFam" id="1.10.8.10:FF:000001">
    <property type="entry name" value="Elongation factor Ts"/>
    <property type="match status" value="1"/>
</dbReference>
<dbReference type="FunFam" id="3.30.479.20:FF:000001">
    <property type="entry name" value="Elongation factor Ts"/>
    <property type="match status" value="1"/>
</dbReference>
<dbReference type="Gene3D" id="1.10.286.20">
    <property type="match status" value="1"/>
</dbReference>
<dbReference type="Gene3D" id="1.10.8.10">
    <property type="entry name" value="DNA helicase RuvA subunit, C-terminal domain"/>
    <property type="match status" value="1"/>
</dbReference>
<dbReference type="Gene3D" id="3.30.479.20">
    <property type="entry name" value="Elongation factor Ts, dimerisation domain"/>
    <property type="match status" value="2"/>
</dbReference>
<dbReference type="HAMAP" id="MF_00050">
    <property type="entry name" value="EF_Ts"/>
    <property type="match status" value="1"/>
</dbReference>
<dbReference type="InterPro" id="IPR036402">
    <property type="entry name" value="EF-Ts_dimer_sf"/>
</dbReference>
<dbReference type="InterPro" id="IPR001816">
    <property type="entry name" value="Transl_elong_EFTs/EF1B"/>
</dbReference>
<dbReference type="InterPro" id="IPR014039">
    <property type="entry name" value="Transl_elong_EFTs/EF1B_dimer"/>
</dbReference>
<dbReference type="InterPro" id="IPR018101">
    <property type="entry name" value="Transl_elong_Ts_CS"/>
</dbReference>
<dbReference type="InterPro" id="IPR009060">
    <property type="entry name" value="UBA-like_sf"/>
</dbReference>
<dbReference type="NCBIfam" id="TIGR00116">
    <property type="entry name" value="tsf"/>
    <property type="match status" value="1"/>
</dbReference>
<dbReference type="PANTHER" id="PTHR11741">
    <property type="entry name" value="ELONGATION FACTOR TS"/>
    <property type="match status" value="1"/>
</dbReference>
<dbReference type="PANTHER" id="PTHR11741:SF0">
    <property type="entry name" value="ELONGATION FACTOR TS, MITOCHONDRIAL"/>
    <property type="match status" value="1"/>
</dbReference>
<dbReference type="Pfam" id="PF00889">
    <property type="entry name" value="EF_TS"/>
    <property type="match status" value="1"/>
</dbReference>
<dbReference type="SUPFAM" id="SSF54713">
    <property type="entry name" value="Elongation factor Ts (EF-Ts), dimerisation domain"/>
    <property type="match status" value="2"/>
</dbReference>
<dbReference type="SUPFAM" id="SSF46934">
    <property type="entry name" value="UBA-like"/>
    <property type="match status" value="1"/>
</dbReference>
<dbReference type="PROSITE" id="PS01127">
    <property type="entry name" value="EF_TS_2"/>
    <property type="match status" value="1"/>
</dbReference>
<proteinExistence type="inferred from homology"/>
<protein>
    <recommendedName>
        <fullName evidence="1">Elongation factor Ts</fullName>
        <shortName evidence="1">EF-Ts</shortName>
    </recommendedName>
</protein>
<organism>
    <name type="scientific">Yersinia pestis bv. Antiqua (strain Antiqua)</name>
    <dbReference type="NCBI Taxonomy" id="360102"/>
    <lineage>
        <taxon>Bacteria</taxon>
        <taxon>Pseudomonadati</taxon>
        <taxon>Pseudomonadota</taxon>
        <taxon>Gammaproteobacteria</taxon>
        <taxon>Enterobacterales</taxon>
        <taxon>Yersiniaceae</taxon>
        <taxon>Yersinia</taxon>
    </lineage>
</organism>
<reference key="1">
    <citation type="journal article" date="2006" name="J. Bacteriol.">
        <title>Complete genome sequence of Yersinia pestis strains Antiqua and Nepal516: evidence of gene reduction in an emerging pathogen.</title>
        <authorList>
            <person name="Chain P.S.G."/>
            <person name="Hu P."/>
            <person name="Malfatti S.A."/>
            <person name="Radnedge L."/>
            <person name="Larimer F."/>
            <person name="Vergez L.M."/>
            <person name="Worsham P."/>
            <person name="Chu M.C."/>
            <person name="Andersen G.L."/>
        </authorList>
    </citation>
    <scope>NUCLEOTIDE SEQUENCE [LARGE SCALE GENOMIC DNA]</scope>
    <source>
        <strain>Antiqua</strain>
    </source>
</reference>
<gene>
    <name evidence="1" type="primary">tsf</name>
    <name type="ordered locus">YPA_0520</name>
</gene>
<sequence length="285" mass="30721">MVAITAALVKELRERTAAGMMECKKALVEANGDIELAIDNMRKSGQAKAAKKAGRIAAEGIILAKVSADGKYGVILELNCETDFVAKDAGFKAFGEEVINAALAEKIADIDVLKAKFEEQRANLVAKIGENINIRRVAVLEGDILGTYLHGARIGVMVAATGADEELVKHIAMHIAASKPEYVKPDDVPAEVVAREHQIQLDIAIESGKPREIAEKMVEGRMRKFTGEVSLTGQNFVMDPSKTVGDLLKENNADVVNFIRFEVGEGIEKVETDFAAEVAAMSKQS</sequence>